<keyword id="KW-0997">Cell inner membrane</keyword>
<keyword id="KW-1003">Cell membrane</keyword>
<keyword id="KW-0201">Cytochrome c-type biogenesis</keyword>
<keyword id="KW-0349">Heme</keyword>
<keyword id="KW-0408">Iron</keyword>
<keyword id="KW-0472">Membrane</keyword>
<keyword id="KW-0479">Metal-binding</keyword>
<keyword id="KW-0735">Signal-anchor</keyword>
<keyword id="KW-0812">Transmembrane</keyword>
<keyword id="KW-1133">Transmembrane helix</keyword>
<accession>Q985G2</accession>
<gene>
    <name evidence="1" type="primary">ccmE</name>
    <name evidence="1" type="synonym">cycJ</name>
    <name type="ordered locus">mlr7689</name>
</gene>
<proteinExistence type="inferred from homology"/>
<comment type="function">
    <text evidence="1">Heme chaperone required for the biogenesis of c-type cytochromes. Transiently binds heme delivered by CcmC and transfers the heme to apo-cytochromes in a process facilitated by CcmF and CcmH.</text>
</comment>
<comment type="subcellular location">
    <subcellularLocation>
        <location evidence="1">Cell inner membrane</location>
        <topology evidence="1">Single-pass type II membrane protein</topology>
        <orientation evidence="1">Periplasmic side</orientation>
    </subcellularLocation>
</comment>
<comment type="similarity">
    <text evidence="1">Belongs to the CcmE/CycJ family.</text>
</comment>
<organism>
    <name type="scientific">Mesorhizobium japonicum (strain LMG 29417 / CECT 9101 / MAFF 303099)</name>
    <name type="common">Mesorhizobium loti (strain MAFF 303099)</name>
    <dbReference type="NCBI Taxonomy" id="266835"/>
    <lineage>
        <taxon>Bacteria</taxon>
        <taxon>Pseudomonadati</taxon>
        <taxon>Pseudomonadota</taxon>
        <taxon>Alphaproteobacteria</taxon>
        <taxon>Hyphomicrobiales</taxon>
        <taxon>Phyllobacteriaceae</taxon>
        <taxon>Mesorhizobium</taxon>
    </lineage>
</organism>
<name>CCME_RHILO</name>
<feature type="chain" id="PRO_0000238850" description="Cytochrome c-type biogenesis protein CcmE">
    <location>
        <begin position="1"/>
        <end position="147"/>
    </location>
</feature>
<feature type="topological domain" description="Cytoplasmic" evidence="1">
    <location>
        <begin position="1"/>
        <end position="7"/>
    </location>
</feature>
<feature type="transmembrane region" description="Helical; Signal-anchor for type II membrane protein" evidence="1">
    <location>
        <begin position="8"/>
        <end position="28"/>
    </location>
</feature>
<feature type="topological domain" description="Periplasmic" evidence="1">
    <location>
        <begin position="29"/>
        <end position="147"/>
    </location>
</feature>
<feature type="binding site" description="covalent" evidence="1">
    <location>
        <position position="122"/>
    </location>
    <ligand>
        <name>heme</name>
        <dbReference type="ChEBI" id="CHEBI:30413"/>
    </ligand>
</feature>
<feature type="binding site" description="axial binding residue" evidence="1">
    <location>
        <position position="126"/>
    </location>
    <ligand>
        <name>heme</name>
        <dbReference type="ChEBI" id="CHEBI:30413"/>
    </ligand>
    <ligandPart>
        <name>Fe</name>
        <dbReference type="ChEBI" id="CHEBI:18248"/>
    </ligandPart>
</feature>
<protein>
    <recommendedName>
        <fullName evidence="1">Cytochrome c-type biogenesis protein CcmE</fullName>
    </recommendedName>
    <alternativeName>
        <fullName evidence="1">Cytochrome c maturation protein E</fullName>
    </alternativeName>
    <alternativeName>
        <fullName evidence="1">Heme chaperone CcmE</fullName>
    </alternativeName>
</protein>
<dbReference type="EMBL" id="BA000012">
    <property type="protein sequence ID" value="BAB54100.1"/>
    <property type="molecule type" value="Genomic_DNA"/>
</dbReference>
<dbReference type="RefSeq" id="WP_010915048.1">
    <property type="nucleotide sequence ID" value="NC_002678.2"/>
</dbReference>
<dbReference type="SMR" id="Q985G2"/>
<dbReference type="GeneID" id="66685073"/>
<dbReference type="KEGG" id="mlo:mlr7689"/>
<dbReference type="eggNOG" id="COG2332">
    <property type="taxonomic scope" value="Bacteria"/>
</dbReference>
<dbReference type="HOGENOM" id="CLU_079503_1_1_5"/>
<dbReference type="Proteomes" id="UP000000552">
    <property type="component" value="Chromosome"/>
</dbReference>
<dbReference type="GO" id="GO:0005886">
    <property type="term" value="C:plasma membrane"/>
    <property type="evidence" value="ECO:0007669"/>
    <property type="project" value="UniProtKB-SubCell"/>
</dbReference>
<dbReference type="GO" id="GO:0020037">
    <property type="term" value="F:heme binding"/>
    <property type="evidence" value="ECO:0007669"/>
    <property type="project" value="InterPro"/>
</dbReference>
<dbReference type="GO" id="GO:0046872">
    <property type="term" value="F:metal ion binding"/>
    <property type="evidence" value="ECO:0007669"/>
    <property type="project" value="UniProtKB-KW"/>
</dbReference>
<dbReference type="GO" id="GO:0017004">
    <property type="term" value="P:cytochrome complex assembly"/>
    <property type="evidence" value="ECO:0007669"/>
    <property type="project" value="UniProtKB-KW"/>
</dbReference>
<dbReference type="Gene3D" id="2.40.50.140">
    <property type="entry name" value="Nucleic acid-binding proteins"/>
    <property type="match status" value="1"/>
</dbReference>
<dbReference type="HAMAP" id="MF_01959">
    <property type="entry name" value="CcmE"/>
    <property type="match status" value="1"/>
</dbReference>
<dbReference type="InterPro" id="IPR004329">
    <property type="entry name" value="CcmE"/>
</dbReference>
<dbReference type="InterPro" id="IPR036127">
    <property type="entry name" value="CcmE-like_sf"/>
</dbReference>
<dbReference type="InterPro" id="IPR012340">
    <property type="entry name" value="NA-bd_OB-fold"/>
</dbReference>
<dbReference type="NCBIfam" id="NF009727">
    <property type="entry name" value="PRK13254.1-1"/>
    <property type="match status" value="1"/>
</dbReference>
<dbReference type="NCBIfam" id="NF009731">
    <property type="entry name" value="PRK13254.1-5"/>
    <property type="match status" value="1"/>
</dbReference>
<dbReference type="PANTHER" id="PTHR34128">
    <property type="entry name" value="CYTOCHROME C-TYPE BIOGENESIS PROTEIN CCME HOMOLOG, MITOCHONDRIAL"/>
    <property type="match status" value="1"/>
</dbReference>
<dbReference type="PANTHER" id="PTHR34128:SF2">
    <property type="entry name" value="CYTOCHROME C-TYPE BIOGENESIS PROTEIN CCME HOMOLOG, MITOCHONDRIAL"/>
    <property type="match status" value="1"/>
</dbReference>
<dbReference type="Pfam" id="PF03100">
    <property type="entry name" value="CcmE"/>
    <property type="match status" value="1"/>
</dbReference>
<dbReference type="SUPFAM" id="SSF82093">
    <property type="entry name" value="Heme chaperone CcmE"/>
    <property type="match status" value="1"/>
</dbReference>
<sequence length="147" mass="15830">MTRKQKRLSVIVGGLAFLGAATGLTFYALGQKASYFYMPADLTTASVQPGQRIRLGGLVEKGTIQRGQGATVAFSVTDTHKSVKVTYTGILPDLFREEQGVITEGSFGPDGVFVADSVLAKHDERYMPKEVADGLKAKGVWQESKSE</sequence>
<reference key="1">
    <citation type="journal article" date="2000" name="DNA Res.">
        <title>Complete genome structure of the nitrogen-fixing symbiotic bacterium Mesorhizobium loti.</title>
        <authorList>
            <person name="Kaneko T."/>
            <person name="Nakamura Y."/>
            <person name="Sato S."/>
            <person name="Asamizu E."/>
            <person name="Kato T."/>
            <person name="Sasamoto S."/>
            <person name="Watanabe A."/>
            <person name="Idesawa K."/>
            <person name="Ishikawa A."/>
            <person name="Kawashima K."/>
            <person name="Kimura T."/>
            <person name="Kishida Y."/>
            <person name="Kiyokawa C."/>
            <person name="Kohara M."/>
            <person name="Matsumoto M."/>
            <person name="Matsuno A."/>
            <person name="Mochizuki Y."/>
            <person name="Nakayama S."/>
            <person name="Nakazaki N."/>
            <person name="Shimpo S."/>
            <person name="Sugimoto M."/>
            <person name="Takeuchi C."/>
            <person name="Yamada M."/>
            <person name="Tabata S."/>
        </authorList>
    </citation>
    <scope>NUCLEOTIDE SEQUENCE [LARGE SCALE GENOMIC DNA]</scope>
    <source>
        <strain>LMG 29417 / CECT 9101 / MAFF 303099</strain>
    </source>
</reference>
<evidence type="ECO:0000255" key="1">
    <source>
        <dbReference type="HAMAP-Rule" id="MF_01959"/>
    </source>
</evidence>